<reference key="1">
    <citation type="journal article" date="2001" name="J. Plant Growth Regul.">
        <title>Quick on the uptake: characterization of a family of plant auxin influx carriers.</title>
        <authorList>
            <person name="Parry P.G."/>
            <person name="Marchant A."/>
            <person name="May S.T."/>
            <person name="Swarup R."/>
            <person name="Swarup K."/>
            <person name="James N."/>
            <person name="Graham N."/>
            <person name="Allen T."/>
            <person name="Martucci T."/>
            <person name="Yemm A."/>
            <person name="Napier R."/>
            <person name="Manning K."/>
            <person name="King G."/>
            <person name="Bennett M.J."/>
        </authorList>
    </citation>
    <scope>NUCLEOTIDE SEQUENCE [MRNA]</scope>
    <scope>GENE FAMILY</scope>
    <scope>NOMENCLATURE</scope>
</reference>
<reference key="2">
    <citation type="journal article" date="2000" name="Nature">
        <title>Sequence and analysis of chromosome 5 of the plant Arabidopsis thaliana.</title>
        <authorList>
            <person name="Tabata S."/>
            <person name="Kaneko T."/>
            <person name="Nakamura Y."/>
            <person name="Kotani H."/>
            <person name="Kato T."/>
            <person name="Asamizu E."/>
            <person name="Miyajima N."/>
            <person name="Sasamoto S."/>
            <person name="Kimura T."/>
            <person name="Hosouchi T."/>
            <person name="Kawashima K."/>
            <person name="Kohara M."/>
            <person name="Matsumoto M."/>
            <person name="Matsuno A."/>
            <person name="Muraki A."/>
            <person name="Nakayama S."/>
            <person name="Nakazaki N."/>
            <person name="Naruo K."/>
            <person name="Okumura S."/>
            <person name="Shinpo S."/>
            <person name="Takeuchi C."/>
            <person name="Wada T."/>
            <person name="Watanabe A."/>
            <person name="Yamada M."/>
            <person name="Yasuda M."/>
            <person name="Sato S."/>
            <person name="de la Bastide M."/>
            <person name="Huang E."/>
            <person name="Spiegel L."/>
            <person name="Gnoj L."/>
            <person name="O'Shaughnessy A."/>
            <person name="Preston R."/>
            <person name="Habermann K."/>
            <person name="Murray J."/>
            <person name="Johnson D."/>
            <person name="Rohlfing T."/>
            <person name="Nelson J."/>
            <person name="Stoneking T."/>
            <person name="Pepin K."/>
            <person name="Spieth J."/>
            <person name="Sekhon M."/>
            <person name="Armstrong J."/>
            <person name="Becker M."/>
            <person name="Belter E."/>
            <person name="Cordum H."/>
            <person name="Cordes M."/>
            <person name="Courtney L."/>
            <person name="Courtney W."/>
            <person name="Dante M."/>
            <person name="Du H."/>
            <person name="Edwards J."/>
            <person name="Fryman J."/>
            <person name="Haakensen B."/>
            <person name="Lamar E."/>
            <person name="Latreille P."/>
            <person name="Leonard S."/>
            <person name="Meyer R."/>
            <person name="Mulvaney E."/>
            <person name="Ozersky P."/>
            <person name="Riley A."/>
            <person name="Strowmatt C."/>
            <person name="Wagner-McPherson C."/>
            <person name="Wollam A."/>
            <person name="Yoakum M."/>
            <person name="Bell M."/>
            <person name="Dedhia N."/>
            <person name="Parnell L."/>
            <person name="Shah R."/>
            <person name="Rodriguez M."/>
            <person name="Hoon See L."/>
            <person name="Vil D."/>
            <person name="Baker J."/>
            <person name="Kirchoff K."/>
            <person name="Toth K."/>
            <person name="King L."/>
            <person name="Bahret A."/>
            <person name="Miller B."/>
            <person name="Marra M.A."/>
            <person name="Martienssen R."/>
            <person name="McCombie W.R."/>
            <person name="Wilson R.K."/>
            <person name="Murphy G."/>
            <person name="Bancroft I."/>
            <person name="Volckaert G."/>
            <person name="Wambutt R."/>
            <person name="Duesterhoeft A."/>
            <person name="Stiekema W."/>
            <person name="Pohl T."/>
            <person name="Entian K.-D."/>
            <person name="Terryn N."/>
            <person name="Hartley N."/>
            <person name="Bent E."/>
            <person name="Johnson S."/>
            <person name="Langham S.-A."/>
            <person name="McCullagh B."/>
            <person name="Robben J."/>
            <person name="Grymonprez B."/>
            <person name="Zimmermann W."/>
            <person name="Ramsperger U."/>
            <person name="Wedler H."/>
            <person name="Balke K."/>
            <person name="Wedler E."/>
            <person name="Peters S."/>
            <person name="van Staveren M."/>
            <person name="Dirkse W."/>
            <person name="Mooijman P."/>
            <person name="Klein Lankhorst R."/>
            <person name="Weitzenegger T."/>
            <person name="Bothe G."/>
            <person name="Rose M."/>
            <person name="Hauf J."/>
            <person name="Berneiser S."/>
            <person name="Hempel S."/>
            <person name="Feldpausch M."/>
            <person name="Lamberth S."/>
            <person name="Villarroel R."/>
            <person name="Gielen J."/>
            <person name="Ardiles W."/>
            <person name="Bents O."/>
            <person name="Lemcke K."/>
            <person name="Kolesov G."/>
            <person name="Mayer K.F.X."/>
            <person name="Rudd S."/>
            <person name="Schoof H."/>
            <person name="Schueller C."/>
            <person name="Zaccaria P."/>
            <person name="Mewes H.-W."/>
            <person name="Bevan M."/>
            <person name="Fransz P.F."/>
        </authorList>
    </citation>
    <scope>NUCLEOTIDE SEQUENCE [LARGE SCALE GENOMIC DNA]</scope>
    <source>
        <strain>cv. Columbia</strain>
    </source>
</reference>
<reference key="3">
    <citation type="journal article" date="2017" name="Plant J.">
        <title>Araport11: a complete reannotation of the Arabidopsis thaliana reference genome.</title>
        <authorList>
            <person name="Cheng C.Y."/>
            <person name="Krishnakumar V."/>
            <person name="Chan A.P."/>
            <person name="Thibaud-Nissen F."/>
            <person name="Schobel S."/>
            <person name="Town C.D."/>
        </authorList>
    </citation>
    <scope>GENOME REANNOTATION</scope>
    <source>
        <strain>cv. Columbia</strain>
    </source>
</reference>
<protein>
    <recommendedName>
        <fullName>Auxin transporter-like protein 1</fullName>
    </recommendedName>
    <alternativeName>
        <fullName>AUX1-like protein 1</fullName>
    </alternativeName>
</protein>
<feature type="chain" id="PRO_0000093842" description="Auxin transporter-like protein 1">
    <location>
        <begin position="1"/>
        <end position="488"/>
    </location>
</feature>
<feature type="topological domain" description="Cytoplasmic" evidence="2">
    <location>
        <begin position="1"/>
        <end position="64"/>
    </location>
</feature>
<feature type="transmembrane region" description="Helical" evidence="2">
    <location>
        <begin position="65"/>
        <end position="82"/>
    </location>
</feature>
<feature type="topological domain" description="Extracellular" evidence="2">
    <location>
        <begin position="83"/>
        <end position="84"/>
    </location>
</feature>
<feature type="transmembrane region" description="Helical" evidence="2">
    <location>
        <begin position="85"/>
        <end position="105"/>
    </location>
</feature>
<feature type="topological domain" description="Cytoplasmic" evidence="2">
    <location>
        <begin position="106"/>
        <end position="141"/>
    </location>
</feature>
<feature type="transmembrane region" description="Helical" evidence="2">
    <location>
        <begin position="142"/>
        <end position="162"/>
    </location>
</feature>
<feature type="topological domain" description="Extracellular" evidence="2">
    <location>
        <begin position="163"/>
        <end position="178"/>
    </location>
</feature>
<feature type="transmembrane region" description="Helical" evidence="2">
    <location>
        <begin position="179"/>
        <end position="199"/>
    </location>
</feature>
<feature type="topological domain" description="Cytoplasmic" evidence="2">
    <location>
        <begin position="200"/>
        <end position="202"/>
    </location>
</feature>
<feature type="transmembrane region" description="Helical" evidence="2">
    <location>
        <begin position="203"/>
        <end position="223"/>
    </location>
</feature>
<feature type="topological domain" description="Extracellular" evidence="2">
    <location>
        <begin position="224"/>
        <end position="238"/>
    </location>
</feature>
<feature type="transmembrane region" description="Helical" evidence="2">
    <location>
        <begin position="239"/>
        <end position="259"/>
    </location>
</feature>
<feature type="topological domain" description="Cytoplasmic" evidence="2">
    <location>
        <begin position="260"/>
        <end position="273"/>
    </location>
</feature>
<feature type="transmembrane region" description="Helical" evidence="2">
    <location>
        <begin position="274"/>
        <end position="294"/>
    </location>
</feature>
<feature type="topological domain" description="Extracellular" evidence="2">
    <location>
        <begin position="295"/>
        <end position="320"/>
    </location>
</feature>
<feature type="transmembrane region" description="Helical" evidence="2">
    <location>
        <begin position="321"/>
        <end position="341"/>
    </location>
</feature>
<feature type="topological domain" description="Cytoplasmic" evidence="2">
    <location>
        <begin position="342"/>
        <end position="362"/>
    </location>
</feature>
<feature type="transmembrane region" description="Helical" evidence="2">
    <location>
        <begin position="363"/>
        <end position="383"/>
    </location>
</feature>
<feature type="topological domain" description="Extracellular" evidence="2">
    <location>
        <position position="384"/>
    </location>
</feature>
<feature type="transmembrane region" description="Helical" evidence="2">
    <location>
        <begin position="385"/>
        <end position="405"/>
    </location>
</feature>
<feature type="topological domain" description="Cytoplasmic" evidence="2">
    <location>
        <begin position="406"/>
        <end position="427"/>
    </location>
</feature>
<feature type="transmembrane region" description="Helical" evidence="2">
    <location>
        <begin position="428"/>
        <end position="448"/>
    </location>
</feature>
<feature type="topological domain" description="Extracellular" evidence="2">
    <location>
        <begin position="449"/>
        <end position="488"/>
    </location>
</feature>
<feature type="region of interest" description="Disordered" evidence="3">
    <location>
        <begin position="1"/>
        <end position="36"/>
    </location>
</feature>
<feature type="glycosylation site" description="N-linked (GlcNAc...) asparagine" evidence="2">
    <location>
        <position position="303"/>
    </location>
</feature>
<feature type="sequence conflict" description="In Ref. 1; CAB55758." evidence="4" ref="1">
    <original>ED</original>
    <variation>DE</variation>
    <location>
        <begin position="16"/>
        <end position="17"/>
    </location>
</feature>
<feature type="sequence conflict" description="In Ref. 1; CAB55758." evidence="4" ref="1">
    <original>V</original>
    <variation>L</variation>
    <location>
        <position position="293"/>
    </location>
</feature>
<feature type="sequence conflict" description="In Ref. 1; CAB55758." evidence="4" ref="1">
    <original>VV</original>
    <variation>C</variation>
    <location>
        <begin position="365"/>
        <end position="366"/>
    </location>
</feature>
<feature type="sequence conflict" description="In Ref. 1; CAB55758." evidence="4" ref="1">
    <original>LA</original>
    <variation>WP</variation>
    <location>
        <begin position="372"/>
        <end position="373"/>
    </location>
</feature>
<feature type="sequence conflict" description="In Ref. 1; CAB55758." evidence="4" ref="1">
    <original>FGP</original>
    <variation>SA</variation>
    <location>
        <begin position="379"/>
        <end position="381"/>
    </location>
</feature>
<feature type="sequence conflict" description="In Ref. 1; CAB55758." evidence="4" ref="1">
    <original>RRNA</original>
    <variation>AER</variation>
    <location>
        <begin position="413"/>
        <end position="416"/>
    </location>
</feature>
<evidence type="ECO:0000250" key="1"/>
<evidence type="ECO:0000255" key="2"/>
<evidence type="ECO:0000256" key="3">
    <source>
        <dbReference type="SAM" id="MobiDB-lite"/>
    </source>
</evidence>
<evidence type="ECO:0000305" key="4"/>
<sequence length="488" mass="54601">MSGEKQAEESIVVSGEDEVAGRKVEDSAAEEDIDGNGGNGFSMKSFLWHGGSAWDAWFSCASNQVAQVLLTLPYSFSQLGMLSGILLQIFYGLMGSWTAYLISVLYVEYRARMEKQEAKSFKNHVIQWFEVLDGLLGPYWKAAGLAFNCTFLLFGSVIQLIACASNIYYINDRLDKRTWTYIFGACCATTVFIPSFHNYRIWSFLGLGMTTYTAWYLTIASFLHGQAEGVTHSGPTKLVLYFTGATNILYTFGGHAVTVEIMHAMWKPRKFKSIYLMATLYVFTLTLPSASAVYWAFGDQLLNHSNAFSLLPKTRFRDTAVILMLIHQFITFGFACTPLYFVWEKAIGMHHTKSLCLRALVRLPVVVPIWFLAIIFPFFGPINSAVGALLVTFTVYIIPALAHMLTYRTASARRNAAEKPPFFIPSWAGVYVINAFIVVWVLVLGFGFGGWASMTNFIRQIDTFGLFAKCYQCKPPPAPIAAGAHHRR</sequence>
<proteinExistence type="evidence at transcript level"/>
<name>LAX1_ARATH</name>
<gene>
    <name type="primary">LAX1</name>
    <name type="ordered locus">At5g01240</name>
    <name type="ORF">F7J8_220</name>
</gene>
<comment type="function">
    <text evidence="1">Carrier protein involved in proton-driven auxin influx. Mediates the formation of auxin gradient from developing leaves (site of auxin biosynthesis) to tips by contributing to the loading of auxin in vascular tissues and facilitating acropetal (base to tip) auxin transport within inner tissues of the root apex, and basipetal (tip to base) auxin transport within outer tissues of the root apex (By similarity).</text>
</comment>
<comment type="subcellular location">
    <subcellularLocation>
        <location evidence="1">Cell membrane</location>
        <topology evidence="1">Multi-pass membrane protein</topology>
    </subcellularLocation>
</comment>
<comment type="alternative products">
    <event type="alternative splicing"/>
    <isoform>
        <id>Q9LFB2-1</id>
        <name>1</name>
        <sequence type="displayed"/>
    </isoform>
    <text>A number of isoforms are produced. According to EST sequences.</text>
</comment>
<comment type="similarity">
    <text evidence="4">Belongs to the amino acid/polyamine transporter 2 family. Amino acid/auxin permease (AAAP) (TC 2.A.18.1) subfamily.</text>
</comment>
<organism>
    <name type="scientific">Arabidopsis thaliana</name>
    <name type="common">Mouse-ear cress</name>
    <dbReference type="NCBI Taxonomy" id="3702"/>
    <lineage>
        <taxon>Eukaryota</taxon>
        <taxon>Viridiplantae</taxon>
        <taxon>Streptophyta</taxon>
        <taxon>Embryophyta</taxon>
        <taxon>Tracheophyta</taxon>
        <taxon>Spermatophyta</taxon>
        <taxon>Magnoliopsida</taxon>
        <taxon>eudicotyledons</taxon>
        <taxon>Gunneridae</taxon>
        <taxon>Pentapetalae</taxon>
        <taxon>rosids</taxon>
        <taxon>malvids</taxon>
        <taxon>Brassicales</taxon>
        <taxon>Brassicaceae</taxon>
        <taxon>Camelineae</taxon>
        <taxon>Arabidopsis</taxon>
    </lineage>
</organism>
<accession>Q9LFB2</accession>
<accession>Q9SMW2</accession>
<keyword id="KW-0025">Alternative splicing</keyword>
<keyword id="KW-0029">Amino-acid transport</keyword>
<keyword id="KW-0927">Auxin signaling pathway</keyword>
<keyword id="KW-1003">Cell membrane</keyword>
<keyword id="KW-0325">Glycoprotein</keyword>
<keyword id="KW-0472">Membrane</keyword>
<keyword id="KW-1185">Reference proteome</keyword>
<keyword id="KW-0769">Symport</keyword>
<keyword id="KW-0812">Transmembrane</keyword>
<keyword id="KW-1133">Transmembrane helix</keyword>
<keyword id="KW-0813">Transport</keyword>
<dbReference type="EMBL" id="AJ249442">
    <property type="protein sequence ID" value="CAB55758.1"/>
    <property type="molecule type" value="mRNA"/>
</dbReference>
<dbReference type="EMBL" id="AL137189">
    <property type="protein sequence ID" value="CAB69852.1"/>
    <property type="molecule type" value="Genomic_DNA"/>
</dbReference>
<dbReference type="EMBL" id="CP002688">
    <property type="protein sequence ID" value="AED90315.1"/>
    <property type="molecule type" value="Genomic_DNA"/>
</dbReference>
<dbReference type="PIR" id="T45964">
    <property type="entry name" value="T45964"/>
</dbReference>
<dbReference type="RefSeq" id="NP_195744.1">
    <molecule id="Q9LFB2-1"/>
    <property type="nucleotide sequence ID" value="NM_120202.5"/>
</dbReference>
<dbReference type="SMR" id="Q9LFB2"/>
<dbReference type="BioGRID" id="17142">
    <property type="interactions" value="1"/>
</dbReference>
<dbReference type="FunCoup" id="Q9LFB2">
    <property type="interactions" value="296"/>
</dbReference>
<dbReference type="STRING" id="3702.Q9LFB2"/>
<dbReference type="GlyCosmos" id="Q9LFB2">
    <property type="glycosylation" value="1 site, No reported glycans"/>
</dbReference>
<dbReference type="GlyGen" id="Q9LFB2">
    <property type="glycosylation" value="1 site"/>
</dbReference>
<dbReference type="iPTMnet" id="Q9LFB2"/>
<dbReference type="PaxDb" id="3702-AT5G01240.1"/>
<dbReference type="ProteomicsDB" id="237076">
    <molecule id="Q9LFB2-1"/>
</dbReference>
<dbReference type="EnsemblPlants" id="AT5G01240.1">
    <molecule id="Q9LFB2-1"/>
    <property type="protein sequence ID" value="AT5G01240.1"/>
    <property type="gene ID" value="AT5G01240"/>
</dbReference>
<dbReference type="GeneID" id="831866"/>
<dbReference type="Gramene" id="AT5G01240.1">
    <molecule id="Q9LFB2-1"/>
    <property type="protein sequence ID" value="AT5G01240.1"/>
    <property type="gene ID" value="AT5G01240"/>
</dbReference>
<dbReference type="KEGG" id="ath:AT5G01240"/>
<dbReference type="Araport" id="AT5G01240"/>
<dbReference type="TAIR" id="AT5G01240">
    <property type="gene designation" value="LAX1"/>
</dbReference>
<dbReference type="eggNOG" id="KOG1303">
    <property type="taxonomic scope" value="Eukaryota"/>
</dbReference>
<dbReference type="InParanoid" id="Q9LFB2"/>
<dbReference type="OMA" id="FANCYQC"/>
<dbReference type="PhylomeDB" id="Q9LFB2"/>
<dbReference type="PRO" id="PR:Q9LFB2"/>
<dbReference type="Proteomes" id="UP000006548">
    <property type="component" value="Chromosome 5"/>
</dbReference>
<dbReference type="ExpressionAtlas" id="Q9LFB2">
    <property type="expression patterns" value="baseline and differential"/>
</dbReference>
<dbReference type="GO" id="GO:0005886">
    <property type="term" value="C:plasma membrane"/>
    <property type="evidence" value="ECO:0007005"/>
    <property type="project" value="TAIR"/>
</dbReference>
<dbReference type="GO" id="GO:0010328">
    <property type="term" value="F:auxin influx transmembrane transporter activity"/>
    <property type="evidence" value="ECO:0000314"/>
    <property type="project" value="TAIR"/>
</dbReference>
<dbReference type="GO" id="GO:0015293">
    <property type="term" value="F:symporter activity"/>
    <property type="evidence" value="ECO:0007669"/>
    <property type="project" value="UniProtKB-KW"/>
</dbReference>
<dbReference type="GO" id="GO:0006865">
    <property type="term" value="P:amino acid transport"/>
    <property type="evidence" value="ECO:0007669"/>
    <property type="project" value="UniProtKB-KW"/>
</dbReference>
<dbReference type="GO" id="GO:0009734">
    <property type="term" value="P:auxin-activated signaling pathway"/>
    <property type="evidence" value="ECO:0007669"/>
    <property type="project" value="UniProtKB-KW"/>
</dbReference>
<dbReference type="GO" id="GO:0048829">
    <property type="term" value="P:root cap development"/>
    <property type="evidence" value="ECO:0000316"/>
    <property type="project" value="TAIR"/>
</dbReference>
<dbReference type="InterPro" id="IPR013057">
    <property type="entry name" value="AA_transpt_TM"/>
</dbReference>
<dbReference type="PANTHER" id="PTHR48017">
    <property type="entry name" value="OS05G0424000 PROTEIN-RELATED"/>
    <property type="match status" value="1"/>
</dbReference>
<dbReference type="Pfam" id="PF01490">
    <property type="entry name" value="Aa_trans"/>
    <property type="match status" value="1"/>
</dbReference>